<protein>
    <recommendedName>
        <fullName>Vitrin</fullName>
    </recommendedName>
</protein>
<reference key="1">
    <citation type="journal article" date="1999" name="Biochem. Soc. Trans.">
        <title>VIT-1: the second member of a new branch of the von Willebrand factor A domain superfamily.</title>
        <authorList>
            <person name="Mayne R."/>
            <person name="Ren Z.-X."/>
            <person name="Liu J.G."/>
            <person name="Cook T."/>
            <person name="Carson M."/>
            <person name="Narayana S."/>
        </authorList>
    </citation>
    <scope>NUCLEOTIDE SEQUENCE [MRNA]</scope>
    <source>
        <tissue>Retina</tissue>
    </source>
</reference>
<name>VITRN_BOVIN</name>
<comment type="function">
    <text evidence="2">Promotes matrix assembly and cell adhesiveness. Plays a role in spinal cord formation by regulating the proliferation and differentiation of neural stem cells.</text>
</comment>
<comment type="subunit">
    <text evidence="1">Binds dermatan sulfate and chondroitin sulfate.</text>
</comment>
<comment type="subcellular location">
    <subcellularLocation>
        <location evidence="1">Secreted</location>
        <location evidence="1">Extracellular space</location>
        <location evidence="1">Extracellular matrix</location>
    </subcellularLocation>
</comment>
<accession>Q95LI2</accession>
<feature type="signal peptide" evidence="3">
    <location>
        <begin position="1"/>
        <end position="26"/>
    </location>
</feature>
<feature type="chain" id="PRO_0000248209" description="Vitrin">
    <location>
        <begin position="27"/>
        <end position="652"/>
    </location>
</feature>
<feature type="domain" description="LCCL" evidence="4">
    <location>
        <begin position="40"/>
        <end position="133"/>
    </location>
</feature>
<feature type="domain" description="VWFA 1" evidence="5">
    <location>
        <begin position="267"/>
        <end position="452"/>
    </location>
</feature>
<feature type="domain" description="VWFA 2" evidence="5">
    <location>
        <begin position="469"/>
        <end position="638"/>
    </location>
</feature>
<feature type="region of interest" description="Disordered" evidence="6">
    <location>
        <begin position="137"/>
        <end position="181"/>
    </location>
</feature>
<feature type="region of interest" description="Disordered" evidence="6">
    <location>
        <begin position="196"/>
        <end position="231"/>
    </location>
</feature>
<feature type="compositionally biased region" description="Low complexity" evidence="6">
    <location>
        <begin position="145"/>
        <end position="158"/>
    </location>
</feature>
<feature type="compositionally biased region" description="Polar residues" evidence="6">
    <location>
        <begin position="196"/>
        <end position="212"/>
    </location>
</feature>
<feature type="glycosylation site" description="N-linked (GlcNAc...) asparagine" evidence="3">
    <location>
        <position position="494"/>
    </location>
</feature>
<feature type="disulfide bond" evidence="4">
    <location>
        <begin position="46"/>
        <end position="62"/>
    </location>
</feature>
<feature type="disulfide bond" evidence="4">
    <location>
        <begin position="66"/>
        <end position="86"/>
    </location>
</feature>
<sequence length="652" mass="70873">MGIVVLTMKASVIEMFLVLLVTGIQSNQEMTKKMKRPKFTVPQISCDVRAGKITNVEFIVKCPPGCQDPRYHVYGADVYASYSSVCGAAVHSGVLDNSGGKILVRKVAGQSGYKGSYSNGVQSLSLPRWRESFVVSEGKPQKGVTYPSSLTYSSSKSPAAKAGETARADQSPPVPGTAAQPVTVTQAPGTTAIEATHTTLPKPSPSAGSTASGLRPQPAGQRSKDLGEPALWKPESVLLDAGFVPKEELSTQSLEPASQGDPSCKVDLSFLIDGSSSIGKRRFRIQKQFLTDVAQTLDIGPAGPLMGVVQYGDNPATQFNLKTHMNSQDVKAAIEKISQRGGLSNAGRAISFVTKNFFSKFNGNRGGAPNVAVVMVDGWPTDKVEEASRLARESGVNIFFITIEGASENEKQYMLEPNFANKAVCRTNGFYSLTVQNWFSLHKTVQPLVKRVCDTDRLACSKTCLNSADIGFVIDGSSSVGTSNFRTVLQFVANLSREFEISDMDTRIGAMQYTYEQRLEFGFDEYSTKSDVLNAIKRVGYWSGGTSTGAAIHYALEQLFKKSKPNKRKLMILITDGRSYDDIRIPAMLAHHKGVITYAIGVAWAAQDELDIIATHPARDHAFFVDEFDNLYKVVPKVIQNICTEFNSQPRN</sequence>
<proteinExistence type="evidence at transcript level"/>
<organism>
    <name type="scientific">Bos taurus</name>
    <name type="common">Bovine</name>
    <dbReference type="NCBI Taxonomy" id="9913"/>
    <lineage>
        <taxon>Eukaryota</taxon>
        <taxon>Metazoa</taxon>
        <taxon>Chordata</taxon>
        <taxon>Craniata</taxon>
        <taxon>Vertebrata</taxon>
        <taxon>Euteleostomi</taxon>
        <taxon>Mammalia</taxon>
        <taxon>Eutheria</taxon>
        <taxon>Laurasiatheria</taxon>
        <taxon>Artiodactyla</taxon>
        <taxon>Ruminantia</taxon>
        <taxon>Pecora</taxon>
        <taxon>Bovidae</taxon>
        <taxon>Bovinae</taxon>
        <taxon>Bos</taxon>
    </lineage>
</organism>
<gene>
    <name type="primary">VIT</name>
</gene>
<evidence type="ECO:0000250" key="1"/>
<evidence type="ECO:0000250" key="2">
    <source>
        <dbReference type="UniProtKB" id="Q8VHI5"/>
    </source>
</evidence>
<evidence type="ECO:0000255" key="3"/>
<evidence type="ECO:0000255" key="4">
    <source>
        <dbReference type="PROSITE-ProRule" id="PRU00123"/>
    </source>
</evidence>
<evidence type="ECO:0000255" key="5">
    <source>
        <dbReference type="PROSITE-ProRule" id="PRU00219"/>
    </source>
</evidence>
<evidence type="ECO:0000256" key="6">
    <source>
        <dbReference type="SAM" id="MobiDB-lite"/>
    </source>
</evidence>
<dbReference type="EMBL" id="AF063832">
    <property type="protein sequence ID" value="AAL18262.2"/>
    <property type="molecule type" value="mRNA"/>
</dbReference>
<dbReference type="RefSeq" id="NP_776396.1">
    <property type="nucleotide sequence ID" value="NM_173971.2"/>
</dbReference>
<dbReference type="SMR" id="Q95LI2"/>
<dbReference type="FunCoup" id="Q95LI2">
    <property type="interactions" value="54"/>
</dbReference>
<dbReference type="STRING" id="9913.ENSBTAP00000059169"/>
<dbReference type="GlyCosmos" id="Q95LI2">
    <property type="glycosylation" value="1 site, No reported glycans"/>
</dbReference>
<dbReference type="GlyGen" id="Q95LI2">
    <property type="glycosylation" value="1 site"/>
</dbReference>
<dbReference type="PaxDb" id="9913-ENSBTAP00000034720"/>
<dbReference type="GeneID" id="280957"/>
<dbReference type="KEGG" id="bta:280957"/>
<dbReference type="CTD" id="5212"/>
<dbReference type="eggNOG" id="KOG1216">
    <property type="taxonomic scope" value="Eukaryota"/>
</dbReference>
<dbReference type="InParanoid" id="Q95LI2"/>
<dbReference type="OrthoDB" id="441660at2759"/>
<dbReference type="Proteomes" id="UP000009136">
    <property type="component" value="Unplaced"/>
</dbReference>
<dbReference type="GO" id="GO:0005576">
    <property type="term" value="C:extracellular region"/>
    <property type="evidence" value="ECO:0007669"/>
    <property type="project" value="UniProtKB-KW"/>
</dbReference>
<dbReference type="GO" id="GO:0005614">
    <property type="term" value="C:interstitial matrix"/>
    <property type="evidence" value="ECO:0000318"/>
    <property type="project" value="GO_Central"/>
</dbReference>
<dbReference type="GO" id="GO:0030198">
    <property type="term" value="P:extracellular matrix organization"/>
    <property type="evidence" value="ECO:0000318"/>
    <property type="project" value="GO_Central"/>
</dbReference>
<dbReference type="GO" id="GO:0010811">
    <property type="term" value="P:positive regulation of cell-substrate adhesion"/>
    <property type="evidence" value="ECO:0000318"/>
    <property type="project" value="GO_Central"/>
</dbReference>
<dbReference type="GO" id="GO:0021510">
    <property type="term" value="P:spinal cord development"/>
    <property type="evidence" value="ECO:0000250"/>
    <property type="project" value="UniProtKB"/>
</dbReference>
<dbReference type="CDD" id="cd01472">
    <property type="entry name" value="vWA_collagen"/>
    <property type="match status" value="1"/>
</dbReference>
<dbReference type="FunFam" id="2.170.130.20:FF:000001">
    <property type="entry name" value="Cysteine-rich secretory protein LCCL domain-containing 1"/>
    <property type="match status" value="1"/>
</dbReference>
<dbReference type="FunFam" id="3.40.50.410:FF:000009">
    <property type="entry name" value="Putative vitrin"/>
    <property type="match status" value="1"/>
</dbReference>
<dbReference type="FunFam" id="3.40.50.410:FF:000025">
    <property type="entry name" value="Vitrin"/>
    <property type="match status" value="1"/>
</dbReference>
<dbReference type="Gene3D" id="2.170.130.20">
    <property type="entry name" value="LCCL-like domain"/>
    <property type="match status" value="1"/>
</dbReference>
<dbReference type="Gene3D" id="3.40.50.410">
    <property type="entry name" value="von Willebrand factor, type A domain"/>
    <property type="match status" value="2"/>
</dbReference>
<dbReference type="InterPro" id="IPR050525">
    <property type="entry name" value="ECM_Assembly_Org"/>
</dbReference>
<dbReference type="InterPro" id="IPR004043">
    <property type="entry name" value="LCCL"/>
</dbReference>
<dbReference type="InterPro" id="IPR036609">
    <property type="entry name" value="LCCL_sf"/>
</dbReference>
<dbReference type="InterPro" id="IPR002035">
    <property type="entry name" value="VWF_A"/>
</dbReference>
<dbReference type="InterPro" id="IPR036465">
    <property type="entry name" value="vWFA_dom_sf"/>
</dbReference>
<dbReference type="PANTHER" id="PTHR24020">
    <property type="entry name" value="COLLAGEN ALPHA"/>
    <property type="match status" value="1"/>
</dbReference>
<dbReference type="PANTHER" id="PTHR24020:SF23">
    <property type="entry name" value="VITRIN"/>
    <property type="match status" value="1"/>
</dbReference>
<dbReference type="Pfam" id="PF03815">
    <property type="entry name" value="LCCL"/>
    <property type="match status" value="1"/>
</dbReference>
<dbReference type="Pfam" id="PF00092">
    <property type="entry name" value="VWA"/>
    <property type="match status" value="2"/>
</dbReference>
<dbReference type="PRINTS" id="PR00453">
    <property type="entry name" value="VWFADOMAIN"/>
</dbReference>
<dbReference type="SMART" id="SM00603">
    <property type="entry name" value="LCCL"/>
    <property type="match status" value="1"/>
</dbReference>
<dbReference type="SMART" id="SM00327">
    <property type="entry name" value="VWA"/>
    <property type="match status" value="2"/>
</dbReference>
<dbReference type="SUPFAM" id="SSF69848">
    <property type="entry name" value="LCCL domain"/>
    <property type="match status" value="1"/>
</dbReference>
<dbReference type="SUPFAM" id="SSF53300">
    <property type="entry name" value="vWA-like"/>
    <property type="match status" value="2"/>
</dbReference>
<dbReference type="PROSITE" id="PS50820">
    <property type="entry name" value="LCCL"/>
    <property type="match status" value="1"/>
</dbReference>
<dbReference type="PROSITE" id="PS50234">
    <property type="entry name" value="VWFA"/>
    <property type="match status" value="2"/>
</dbReference>
<keyword id="KW-1015">Disulfide bond</keyword>
<keyword id="KW-0272">Extracellular matrix</keyword>
<keyword id="KW-0325">Glycoprotein</keyword>
<keyword id="KW-0524">Neurogenesis</keyword>
<keyword id="KW-1185">Reference proteome</keyword>
<keyword id="KW-0677">Repeat</keyword>
<keyword id="KW-0964">Secreted</keyword>
<keyword id="KW-0732">Signal</keyword>